<sequence length="52" mass="6313">MASKNREIIKLKSTESSEMYWTVKNKRKTSGRLELKKYDRKLRKHVIFKEAK</sequence>
<protein>
    <recommendedName>
        <fullName evidence="1">Large ribosomal subunit protein bL33</fullName>
    </recommendedName>
    <alternativeName>
        <fullName>50S ribosomal protein L33</fullName>
    </alternativeName>
</protein>
<keyword id="KW-1185">Reference proteome</keyword>
<keyword id="KW-0687">Ribonucleoprotein</keyword>
<keyword id="KW-0689">Ribosomal protein</keyword>
<comment type="similarity">
    <text evidence="1">Belongs to the bacterial ribosomal protein bL33 family.</text>
</comment>
<gene>
    <name type="primary">rpmG</name>
    <name type="synonym">rl33</name>
    <name type="ordered locus">CT_150</name>
</gene>
<accession>O84152</accession>
<proteinExistence type="inferred from homology"/>
<feature type="chain" id="PRO_0000170153" description="Large ribosomal subunit protein bL33">
    <location>
        <begin position="1"/>
        <end position="52"/>
    </location>
</feature>
<dbReference type="EMBL" id="AE001273">
    <property type="protein sequence ID" value="AAC67741.1"/>
    <property type="molecule type" value="Genomic_DNA"/>
</dbReference>
<dbReference type="PIR" id="B71550">
    <property type="entry name" value="B71550"/>
</dbReference>
<dbReference type="RefSeq" id="NP_219653.1">
    <property type="nucleotide sequence ID" value="NC_000117.1"/>
</dbReference>
<dbReference type="RefSeq" id="WP_009871496.1">
    <property type="nucleotide sequence ID" value="NC_000117.1"/>
</dbReference>
<dbReference type="SMR" id="O84152"/>
<dbReference type="STRING" id="272561.CT_150"/>
<dbReference type="EnsemblBacteria" id="AAC67741">
    <property type="protein sequence ID" value="AAC67741"/>
    <property type="gene ID" value="CT_150"/>
</dbReference>
<dbReference type="GeneID" id="884187"/>
<dbReference type="KEGG" id="ctr:CT_150"/>
<dbReference type="PATRIC" id="fig|272561.5.peg.164"/>
<dbReference type="HOGENOM" id="CLU_190949_1_1_0"/>
<dbReference type="InParanoid" id="O84152"/>
<dbReference type="OrthoDB" id="21586at2"/>
<dbReference type="Proteomes" id="UP000000431">
    <property type="component" value="Chromosome"/>
</dbReference>
<dbReference type="GO" id="GO:0022625">
    <property type="term" value="C:cytosolic large ribosomal subunit"/>
    <property type="evidence" value="ECO:0000318"/>
    <property type="project" value="GO_Central"/>
</dbReference>
<dbReference type="GO" id="GO:0003735">
    <property type="term" value="F:structural constituent of ribosome"/>
    <property type="evidence" value="ECO:0000318"/>
    <property type="project" value="GO_Central"/>
</dbReference>
<dbReference type="GO" id="GO:0006412">
    <property type="term" value="P:translation"/>
    <property type="evidence" value="ECO:0007669"/>
    <property type="project" value="UniProtKB-UniRule"/>
</dbReference>
<dbReference type="FunFam" id="2.20.28.120:FF:000009">
    <property type="entry name" value="50S ribosomal protein L33"/>
    <property type="match status" value="1"/>
</dbReference>
<dbReference type="Gene3D" id="2.20.28.120">
    <property type="entry name" value="Ribosomal protein L33"/>
    <property type="match status" value="1"/>
</dbReference>
<dbReference type="HAMAP" id="MF_00294">
    <property type="entry name" value="Ribosomal_bL33"/>
    <property type="match status" value="1"/>
</dbReference>
<dbReference type="InterPro" id="IPR001705">
    <property type="entry name" value="Ribosomal_bL33"/>
</dbReference>
<dbReference type="InterPro" id="IPR018264">
    <property type="entry name" value="Ribosomal_bL33_CS"/>
</dbReference>
<dbReference type="InterPro" id="IPR038584">
    <property type="entry name" value="Ribosomal_bL33_sf"/>
</dbReference>
<dbReference type="InterPro" id="IPR011332">
    <property type="entry name" value="Ribosomal_zn-bd"/>
</dbReference>
<dbReference type="NCBIfam" id="NF001860">
    <property type="entry name" value="PRK00595.1"/>
    <property type="match status" value="1"/>
</dbReference>
<dbReference type="NCBIfam" id="TIGR01023">
    <property type="entry name" value="rpmG_bact"/>
    <property type="match status" value="1"/>
</dbReference>
<dbReference type="PANTHER" id="PTHR15238">
    <property type="entry name" value="54S RIBOSOMAL PROTEIN L39, MITOCHONDRIAL"/>
    <property type="match status" value="1"/>
</dbReference>
<dbReference type="PANTHER" id="PTHR15238:SF1">
    <property type="entry name" value="LARGE RIBOSOMAL SUBUNIT PROTEIN BL33M"/>
    <property type="match status" value="1"/>
</dbReference>
<dbReference type="Pfam" id="PF00471">
    <property type="entry name" value="Ribosomal_L33"/>
    <property type="match status" value="1"/>
</dbReference>
<dbReference type="SUPFAM" id="SSF57829">
    <property type="entry name" value="Zn-binding ribosomal proteins"/>
    <property type="match status" value="1"/>
</dbReference>
<dbReference type="PROSITE" id="PS00582">
    <property type="entry name" value="RIBOSOMAL_L33"/>
    <property type="match status" value="1"/>
</dbReference>
<reference key="1">
    <citation type="journal article" date="1998" name="Science">
        <title>Genome sequence of an obligate intracellular pathogen of humans: Chlamydia trachomatis.</title>
        <authorList>
            <person name="Stephens R.S."/>
            <person name="Kalman S."/>
            <person name="Lammel C.J."/>
            <person name="Fan J."/>
            <person name="Marathe R."/>
            <person name="Aravind L."/>
            <person name="Mitchell W.P."/>
            <person name="Olinger L."/>
            <person name="Tatusov R.L."/>
            <person name="Zhao Q."/>
            <person name="Koonin E.V."/>
            <person name="Davis R.W."/>
        </authorList>
    </citation>
    <scope>NUCLEOTIDE SEQUENCE [LARGE SCALE GENOMIC DNA]</scope>
    <source>
        <strain>ATCC VR-885 / DSM 19411 / UW-3/Cx</strain>
    </source>
</reference>
<name>RL33_CHLTR</name>
<organism>
    <name type="scientific">Chlamydia trachomatis serovar D (strain ATCC VR-885 / DSM 19411 / UW-3/Cx)</name>
    <dbReference type="NCBI Taxonomy" id="272561"/>
    <lineage>
        <taxon>Bacteria</taxon>
        <taxon>Pseudomonadati</taxon>
        <taxon>Chlamydiota</taxon>
        <taxon>Chlamydiia</taxon>
        <taxon>Chlamydiales</taxon>
        <taxon>Chlamydiaceae</taxon>
        <taxon>Chlamydia/Chlamydophila group</taxon>
        <taxon>Chlamydia</taxon>
    </lineage>
</organism>
<evidence type="ECO:0000305" key="1"/>